<organism>
    <name type="scientific">Xenopus laevis</name>
    <name type="common">African clawed frog</name>
    <dbReference type="NCBI Taxonomy" id="8355"/>
    <lineage>
        <taxon>Eukaryota</taxon>
        <taxon>Metazoa</taxon>
        <taxon>Chordata</taxon>
        <taxon>Craniata</taxon>
        <taxon>Vertebrata</taxon>
        <taxon>Euteleostomi</taxon>
        <taxon>Amphibia</taxon>
        <taxon>Batrachia</taxon>
        <taxon>Anura</taxon>
        <taxon>Pipoidea</taxon>
        <taxon>Pipidae</taxon>
        <taxon>Xenopodinae</taxon>
        <taxon>Xenopus</taxon>
        <taxon>Xenopus</taxon>
    </lineage>
</organism>
<proteinExistence type="evidence at protein level"/>
<gene>
    <name type="primary">fbxw1</name>
    <name type="synonym">btrcp</name>
</gene>
<sequence>MEGFSCSLQPPTASEREDCNRDEPPRKIITEKNTLRQTKLANGTSSMIVPKQRKLSANYEKEKELCVKYFEQWSECDQVEFVEHLISRMCHYQHGHINTYLKPMLQRDFITALPARGLDHIAENILSYLDAKSLCSAELVCKEWYRVTSDGMLWKKLIERMVRTDSLWRGLAERRGWGQYLFKNKPPDGKTPPNSFYRALYPKIIQDIETIESNWRCGRHSLQRIHCRSETSKGVYCLQYDDQKIVSGLRDNTIKIWDKNTLECKRVLMGHTGSVLCLQYDERVIITGSSDSTVRVWDVNTGEMLNTLIHHCEAVLHLRFNNGMMVTCSKDRSIAVWDMASATDITLRRVLVGHRAAVNVVDFDDKYIVSASGDRTIKVWNTSTCEFVRTLNGHKRGIACLQYRDRLVVSGSSDNTIRLWDIECGACLRVLEGHEELVRCIRFDNKRIVSGAYDGKIKVWDLVAALDPRAPAGTLCLRTLVEHSGRVFRLQFDEFQIVSSSHDDTILIWDFLNDPGLA</sequence>
<dbReference type="EMBL" id="M98268">
    <property type="protein sequence ID" value="AAA02810.1"/>
    <property type="molecule type" value="mRNA"/>
</dbReference>
<dbReference type="EMBL" id="BC079732">
    <property type="protein sequence ID" value="AAH79732.1"/>
    <property type="molecule type" value="mRNA"/>
</dbReference>
<dbReference type="EMBL" id="U63921">
    <property type="protein sequence ID" value="AAB49671.1"/>
    <property type="molecule type" value="mRNA"/>
</dbReference>
<dbReference type="EMBL" id="U63922">
    <property type="protein sequence ID" value="AAB49672.1"/>
    <property type="molecule type" value="mRNA"/>
</dbReference>
<dbReference type="PIR" id="B48088">
    <property type="entry name" value="B48088"/>
</dbReference>
<dbReference type="SMR" id="Q91854"/>
<dbReference type="BioGRID" id="98964">
    <property type="interactions" value="4"/>
</dbReference>
<dbReference type="DIP" id="DIP-44075N"/>
<dbReference type="IntAct" id="Q91854">
    <property type="interactions" value="2"/>
</dbReference>
<dbReference type="MINT" id="Q91854"/>
<dbReference type="DNASU" id="394362"/>
<dbReference type="GeneID" id="394362"/>
<dbReference type="KEGG" id="xla:394362"/>
<dbReference type="AGR" id="Xenbase:XB-GENE-865578"/>
<dbReference type="CTD" id="394362"/>
<dbReference type="Xenbase" id="XB-GENE-865578">
    <property type="gene designation" value="btrc.S"/>
</dbReference>
<dbReference type="OrthoDB" id="19711at2759"/>
<dbReference type="Proteomes" id="UP000186698">
    <property type="component" value="Chromosome 7S"/>
</dbReference>
<dbReference type="Bgee" id="394362">
    <property type="expression patterns" value="Expressed in egg cell and 19 other cell types or tissues"/>
</dbReference>
<dbReference type="GO" id="GO:0008013">
    <property type="term" value="F:beta-catenin binding"/>
    <property type="evidence" value="ECO:0000314"/>
    <property type="project" value="ParkinsonsUK-UCL"/>
</dbReference>
<dbReference type="GO" id="GO:0051219">
    <property type="term" value="F:phosphoprotein binding"/>
    <property type="evidence" value="ECO:0000314"/>
    <property type="project" value="ParkinsonsUK-UCL"/>
</dbReference>
<dbReference type="GO" id="GO:0046983">
    <property type="term" value="F:protein dimerization activity"/>
    <property type="evidence" value="ECO:0007669"/>
    <property type="project" value="InterPro"/>
</dbReference>
<dbReference type="GO" id="GO:0016055">
    <property type="term" value="P:Wnt signaling pathway"/>
    <property type="evidence" value="ECO:0007669"/>
    <property type="project" value="UniProtKB-KW"/>
</dbReference>
<dbReference type="CDD" id="cd22182">
    <property type="entry name" value="F-box_FBXW1A"/>
    <property type="match status" value="1"/>
</dbReference>
<dbReference type="CDD" id="cd00200">
    <property type="entry name" value="WD40"/>
    <property type="match status" value="1"/>
</dbReference>
<dbReference type="FunFam" id="1.20.1280.50:FF:000001">
    <property type="entry name" value="F-box/WD repeat-containing protein 11 isoform X2"/>
    <property type="match status" value="1"/>
</dbReference>
<dbReference type="FunFam" id="2.130.10.10:FF:000004">
    <property type="entry name" value="F-box/WD repeat-containing protein 11 isoform X2"/>
    <property type="match status" value="1"/>
</dbReference>
<dbReference type="Gene3D" id="1.20.1280.50">
    <property type="match status" value="1"/>
</dbReference>
<dbReference type="Gene3D" id="6.10.250.1840">
    <property type="match status" value="1"/>
</dbReference>
<dbReference type="Gene3D" id="2.130.10.10">
    <property type="entry name" value="YVTN repeat-like/Quinoprotein amine dehydrogenase"/>
    <property type="match status" value="1"/>
</dbReference>
<dbReference type="InterPro" id="IPR021977">
    <property type="entry name" value="Beta-TrCP_D"/>
</dbReference>
<dbReference type="InterPro" id="IPR036047">
    <property type="entry name" value="F-box-like_dom_sf"/>
</dbReference>
<dbReference type="InterPro" id="IPR001810">
    <property type="entry name" value="F-box_dom"/>
</dbReference>
<dbReference type="InterPro" id="IPR020472">
    <property type="entry name" value="G-protein_beta_WD-40_rep"/>
</dbReference>
<dbReference type="InterPro" id="IPR050995">
    <property type="entry name" value="WD-F-box_domain-protein"/>
</dbReference>
<dbReference type="InterPro" id="IPR015943">
    <property type="entry name" value="WD40/YVTN_repeat-like_dom_sf"/>
</dbReference>
<dbReference type="InterPro" id="IPR019775">
    <property type="entry name" value="WD40_repeat_CS"/>
</dbReference>
<dbReference type="InterPro" id="IPR036322">
    <property type="entry name" value="WD40_repeat_dom_sf"/>
</dbReference>
<dbReference type="InterPro" id="IPR001680">
    <property type="entry name" value="WD40_rpt"/>
</dbReference>
<dbReference type="PANTHER" id="PTHR14604:SF5">
    <property type="entry name" value="F-BOX_WD REPEAT-CONTAINING PROTEIN 1A"/>
    <property type="match status" value="1"/>
</dbReference>
<dbReference type="PANTHER" id="PTHR14604">
    <property type="entry name" value="WD40 REPEAT PF20"/>
    <property type="match status" value="1"/>
</dbReference>
<dbReference type="Pfam" id="PF12125">
    <property type="entry name" value="Beta-TrCP_D"/>
    <property type="match status" value="1"/>
</dbReference>
<dbReference type="Pfam" id="PF12937">
    <property type="entry name" value="F-box-like"/>
    <property type="match status" value="1"/>
</dbReference>
<dbReference type="Pfam" id="PF00400">
    <property type="entry name" value="WD40"/>
    <property type="match status" value="7"/>
</dbReference>
<dbReference type="PRINTS" id="PR00320">
    <property type="entry name" value="GPROTEINBRPT"/>
</dbReference>
<dbReference type="SMART" id="SM01028">
    <property type="entry name" value="Beta-TrCP_D"/>
    <property type="match status" value="1"/>
</dbReference>
<dbReference type="SMART" id="SM00256">
    <property type="entry name" value="FBOX"/>
    <property type="match status" value="1"/>
</dbReference>
<dbReference type="SMART" id="SM00320">
    <property type="entry name" value="WD40"/>
    <property type="match status" value="7"/>
</dbReference>
<dbReference type="SUPFAM" id="SSF81383">
    <property type="entry name" value="F-box domain"/>
    <property type="match status" value="1"/>
</dbReference>
<dbReference type="SUPFAM" id="SSF50978">
    <property type="entry name" value="WD40 repeat-like"/>
    <property type="match status" value="1"/>
</dbReference>
<dbReference type="PROSITE" id="PS50181">
    <property type="entry name" value="FBOX"/>
    <property type="match status" value="1"/>
</dbReference>
<dbReference type="PROSITE" id="PS00678">
    <property type="entry name" value="WD_REPEATS_1"/>
    <property type="match status" value="6"/>
</dbReference>
<dbReference type="PROSITE" id="PS50082">
    <property type="entry name" value="WD_REPEATS_2"/>
    <property type="match status" value="7"/>
</dbReference>
<dbReference type="PROSITE" id="PS50294">
    <property type="entry name" value="WD_REPEATS_REGION"/>
    <property type="match status" value="1"/>
</dbReference>
<reference key="1">
    <citation type="journal article" date="1993" name="Mol. Cell. Biol.">
        <title>Saccharomyces cerevisiae cdc15 mutants arrested at a late stage in anaphase are rescued by Xenopus cDNAs encoding N-ras or a protein with beta-transducin repeats.</title>
        <authorList>
            <person name="Spevak W."/>
            <person name="Keiper B.D."/>
            <person name="Stratowa C."/>
            <person name="Castanon M.J."/>
        </authorList>
    </citation>
    <scope>NUCLEOTIDE SEQUENCE [MRNA]</scope>
</reference>
<reference key="2">
    <citation type="submission" date="2004-08" db="EMBL/GenBank/DDBJ databases">
        <authorList>
            <consortium name="NIH - Xenopus Gene Collection (XGC) project"/>
        </authorList>
    </citation>
    <scope>NUCLEOTIDE SEQUENCE [LARGE SCALE MRNA]</scope>
    <source>
        <tissue>Oocyte</tissue>
    </source>
</reference>
<reference key="3">
    <citation type="journal article" date="1996" name="Dev. Genet.">
        <title>Identification of new localized RNAs in the Xenopus oocyte by differential display PCR.</title>
        <authorList>
            <person name="Hudson J.W."/>
            <person name="Alarcon V.B."/>
            <person name="Elinson R.P."/>
        </authorList>
    </citation>
    <scope>NUCLEOTIDE SEQUENCE [MRNA] OF 302-518</scope>
</reference>
<reference key="4">
    <citation type="journal article" date="2007" name="EMBO Rep.">
        <title>Pin1 stabilizes Emi1 during G2 phase by preventing its association with SCF(betatrcp).</title>
        <authorList>
            <person name="Bernis C."/>
            <person name="Vigneron S."/>
            <person name="Burgess A."/>
            <person name="Labbe J.C."/>
            <person name="Fesquet D."/>
            <person name="Castro A."/>
            <person name="Lorca T."/>
        </authorList>
    </citation>
    <scope>INTERACTION WITH FBXO5</scope>
</reference>
<evidence type="ECO:0000250" key="1"/>
<evidence type="ECO:0000255" key="2">
    <source>
        <dbReference type="PROSITE-ProRule" id="PRU00080"/>
    </source>
</evidence>
<evidence type="ECO:0000256" key="3">
    <source>
        <dbReference type="SAM" id="MobiDB-lite"/>
    </source>
</evidence>
<evidence type="ECO:0000269" key="4">
    <source>
    </source>
</evidence>
<evidence type="ECO:0000305" key="5"/>
<accession>Q91854</accession>
<accession>P70037</accession>
<accession>P70038</accession>
<accession>Q6AX69</accession>
<feature type="chain" id="PRO_0000050987" description="Beta-TrCP">
    <location>
        <begin position="1"/>
        <end position="518"/>
    </location>
</feature>
<feature type="domain" description="F-box" evidence="2">
    <location>
        <begin position="119"/>
        <end position="157"/>
    </location>
</feature>
<feature type="repeat" description="WD 1">
    <location>
        <begin position="230"/>
        <end position="258"/>
    </location>
</feature>
<feature type="repeat" description="WD 2">
    <location>
        <begin position="270"/>
        <end position="298"/>
    </location>
</feature>
<feature type="repeat" description="WD 3">
    <location>
        <begin position="310"/>
        <end position="338"/>
    </location>
</feature>
<feature type="repeat" description="WD 4">
    <location>
        <begin position="353"/>
        <end position="381"/>
    </location>
</feature>
<feature type="repeat" description="WD 5">
    <location>
        <begin position="393"/>
        <end position="421"/>
    </location>
</feature>
<feature type="repeat" description="WD 6">
    <location>
        <begin position="433"/>
        <end position="461"/>
    </location>
</feature>
<feature type="repeat" description="WD 7">
    <location>
        <begin position="482"/>
        <end position="510"/>
    </location>
</feature>
<feature type="region of interest" description="Disordered" evidence="3">
    <location>
        <begin position="1"/>
        <end position="24"/>
    </location>
</feature>
<feature type="compositionally biased region" description="Polar residues" evidence="3">
    <location>
        <begin position="1"/>
        <end position="12"/>
    </location>
</feature>
<feature type="compositionally biased region" description="Basic and acidic residues" evidence="3">
    <location>
        <begin position="14"/>
        <end position="24"/>
    </location>
</feature>
<feature type="sequence conflict" description="In Ref. 3." evidence="5" ref="3">
    <original>GEM</original>
    <variation>EFR</variation>
    <location>
        <begin position="302"/>
        <end position="304"/>
    </location>
</feature>
<feature type="sequence conflict" description="In Ref. 3." evidence="5" ref="3">
    <original>GLA</original>
    <variation>AAH</variation>
    <location>
        <begin position="516"/>
        <end position="518"/>
    </location>
</feature>
<keyword id="KW-1185">Reference proteome</keyword>
<keyword id="KW-0677">Repeat</keyword>
<keyword id="KW-0833">Ubl conjugation pathway</keyword>
<keyword id="KW-0853">WD repeat</keyword>
<keyword id="KW-0879">Wnt signaling pathway</keyword>
<protein>
    <recommendedName>
        <fullName>Beta-TrCP</fullName>
    </recommendedName>
    <alternativeName>
        <fullName>Beta-transducin repeat-containing protein</fullName>
    </alternativeName>
</protein>
<comment type="function">
    <text>Substrate recognition component of a SCF (SKP1-CUL1-F-box protein) E3 ubiquitin-protein ligase complex which mediates the ubiquitination and subsequent proteasomal degradation of target proteins. Probably recognizes and binds to phosphorylated target proteins. May participate in Wnt signaling.</text>
</comment>
<comment type="subunit">
    <text evidence="1 4">Part of a SCF (SKP1-cullin-F-box) ubiquitin-protein ligase complex. Interacts with fbxo5 (PubMed:17159919).</text>
</comment>
<comment type="interaction">
    <interactant intactId="EBI-7161238">
        <id>Q91854</id>
    </interactant>
    <interactant intactId="EBI-65730">
        <id>Q91572</id>
        <label>cpeb1-a</label>
    </interactant>
    <organismsDiffer>false</organismsDiffer>
    <experiments>2</experiments>
</comment>
<comment type="developmental stage">
    <text>Present in fully grown and progesterone-matured oocytes. The level change very little even after zygotic gene transcription begins following the midblastula transition. Do not increase in abundance in the gastrula, neurula, tailbud, or tadpole embryo.</text>
</comment>
<name>TRCB_XENLA</name>